<accession>Q5NZS3</accession>
<keyword id="KW-0963">Cytoplasm</keyword>
<keyword id="KW-1185">Reference proteome</keyword>
<keyword id="KW-0690">Ribosome biogenesis</keyword>
<gene>
    <name evidence="1" type="primary">rimP</name>
    <name type="ordered locus">AZOSEA33160</name>
    <name type="ORF">ebA5838</name>
</gene>
<organism>
    <name type="scientific">Aromatoleum aromaticum (strain DSM 19018 / LMG 30748 / EbN1)</name>
    <name type="common">Azoarcus sp. (strain EbN1)</name>
    <dbReference type="NCBI Taxonomy" id="76114"/>
    <lineage>
        <taxon>Bacteria</taxon>
        <taxon>Pseudomonadati</taxon>
        <taxon>Pseudomonadota</taxon>
        <taxon>Betaproteobacteria</taxon>
        <taxon>Rhodocyclales</taxon>
        <taxon>Rhodocyclaceae</taxon>
        <taxon>Aromatoleum</taxon>
    </lineage>
</organism>
<protein>
    <recommendedName>
        <fullName evidence="1">Ribosome maturation factor RimP</fullName>
    </recommendedName>
</protein>
<sequence length="142" mass="15974">MDVEGLVEQVVSGLGFELVDFETSPKGRLMRVFIDIERGVTVDDCATVSNQLTRVFEVENVDYDRLEVSSPGLDRPLKKTADFERFAGDEVQVRLRMPIGNQRNFIGVLEGLSEGVVRLHTDKGDVAFPFDEIEKARLVPKF</sequence>
<evidence type="ECO:0000255" key="1">
    <source>
        <dbReference type="HAMAP-Rule" id="MF_01077"/>
    </source>
</evidence>
<name>RIMP_AROAE</name>
<proteinExistence type="inferred from homology"/>
<reference key="1">
    <citation type="journal article" date="2005" name="Arch. Microbiol.">
        <title>The genome sequence of an anaerobic aromatic-degrading denitrifying bacterium, strain EbN1.</title>
        <authorList>
            <person name="Rabus R."/>
            <person name="Kube M."/>
            <person name="Heider J."/>
            <person name="Beck A."/>
            <person name="Heitmann K."/>
            <person name="Widdel F."/>
            <person name="Reinhardt R."/>
        </authorList>
    </citation>
    <scope>NUCLEOTIDE SEQUENCE [LARGE SCALE GENOMIC DNA]</scope>
    <source>
        <strain>DSM 19018 / LMG 30748 / EbN1</strain>
    </source>
</reference>
<comment type="function">
    <text evidence="1">Required for maturation of 30S ribosomal subunits.</text>
</comment>
<comment type="subcellular location">
    <subcellularLocation>
        <location evidence="1">Cytoplasm</location>
    </subcellularLocation>
</comment>
<comment type="similarity">
    <text evidence="1">Belongs to the RimP family.</text>
</comment>
<dbReference type="EMBL" id="CR555306">
    <property type="protein sequence ID" value="CAI09441.1"/>
    <property type="molecule type" value="Genomic_DNA"/>
</dbReference>
<dbReference type="RefSeq" id="WP_011239104.1">
    <property type="nucleotide sequence ID" value="NC_006513.1"/>
</dbReference>
<dbReference type="SMR" id="Q5NZS3"/>
<dbReference type="STRING" id="76114.ebA5838"/>
<dbReference type="KEGG" id="eba:ebA5838"/>
<dbReference type="eggNOG" id="COG0779">
    <property type="taxonomic scope" value="Bacteria"/>
</dbReference>
<dbReference type="HOGENOM" id="CLU_070525_1_0_4"/>
<dbReference type="Proteomes" id="UP000006552">
    <property type="component" value="Chromosome"/>
</dbReference>
<dbReference type="GO" id="GO:0005829">
    <property type="term" value="C:cytosol"/>
    <property type="evidence" value="ECO:0007669"/>
    <property type="project" value="TreeGrafter"/>
</dbReference>
<dbReference type="GO" id="GO:0000028">
    <property type="term" value="P:ribosomal small subunit assembly"/>
    <property type="evidence" value="ECO:0007669"/>
    <property type="project" value="TreeGrafter"/>
</dbReference>
<dbReference type="GO" id="GO:0006412">
    <property type="term" value="P:translation"/>
    <property type="evidence" value="ECO:0007669"/>
    <property type="project" value="TreeGrafter"/>
</dbReference>
<dbReference type="CDD" id="cd01734">
    <property type="entry name" value="YlxS_C"/>
    <property type="match status" value="1"/>
</dbReference>
<dbReference type="Gene3D" id="2.30.30.180">
    <property type="entry name" value="Ribosome maturation factor RimP, C-terminal domain"/>
    <property type="match status" value="1"/>
</dbReference>
<dbReference type="Gene3D" id="3.30.300.70">
    <property type="entry name" value="RimP-like superfamily, N-terminal"/>
    <property type="match status" value="1"/>
</dbReference>
<dbReference type="HAMAP" id="MF_01077">
    <property type="entry name" value="RimP"/>
    <property type="match status" value="1"/>
</dbReference>
<dbReference type="InterPro" id="IPR003728">
    <property type="entry name" value="Ribosome_maturation_RimP"/>
</dbReference>
<dbReference type="InterPro" id="IPR028998">
    <property type="entry name" value="RimP_C"/>
</dbReference>
<dbReference type="InterPro" id="IPR036847">
    <property type="entry name" value="RimP_C_sf"/>
</dbReference>
<dbReference type="InterPro" id="IPR028989">
    <property type="entry name" value="RimP_N"/>
</dbReference>
<dbReference type="InterPro" id="IPR035956">
    <property type="entry name" value="RimP_N_sf"/>
</dbReference>
<dbReference type="NCBIfam" id="NF000929">
    <property type="entry name" value="PRK00092.2-1"/>
    <property type="match status" value="1"/>
</dbReference>
<dbReference type="PANTHER" id="PTHR33867">
    <property type="entry name" value="RIBOSOME MATURATION FACTOR RIMP"/>
    <property type="match status" value="1"/>
</dbReference>
<dbReference type="PANTHER" id="PTHR33867:SF1">
    <property type="entry name" value="RIBOSOME MATURATION FACTOR RIMP"/>
    <property type="match status" value="1"/>
</dbReference>
<dbReference type="Pfam" id="PF17384">
    <property type="entry name" value="DUF150_C"/>
    <property type="match status" value="1"/>
</dbReference>
<dbReference type="Pfam" id="PF02576">
    <property type="entry name" value="RimP_N"/>
    <property type="match status" value="1"/>
</dbReference>
<dbReference type="SUPFAM" id="SSF74942">
    <property type="entry name" value="YhbC-like, C-terminal domain"/>
    <property type="match status" value="1"/>
</dbReference>
<dbReference type="SUPFAM" id="SSF75420">
    <property type="entry name" value="YhbC-like, N-terminal domain"/>
    <property type="match status" value="1"/>
</dbReference>
<feature type="chain" id="PRO_0000229215" description="Ribosome maturation factor RimP">
    <location>
        <begin position="1"/>
        <end position="142"/>
    </location>
</feature>